<gene>
    <name evidence="1" type="primary">rplJ</name>
    <name type="ordered locus">SPAB_05139</name>
</gene>
<comment type="function">
    <text evidence="1">Forms part of the ribosomal stalk, playing a central role in the interaction of the ribosome with GTP-bound translation factors.</text>
</comment>
<comment type="subunit">
    <text evidence="1">Part of the ribosomal stalk of the 50S ribosomal subunit. The N-terminus interacts with L11 and the large rRNA to form the base of the stalk. The C-terminus forms an elongated spine to which L12 dimers bind in a sequential fashion forming a multimeric L10(L12)X complex.</text>
</comment>
<comment type="similarity">
    <text evidence="1">Belongs to the universal ribosomal protein uL10 family.</text>
</comment>
<proteinExistence type="inferred from homology"/>
<organism>
    <name type="scientific">Salmonella paratyphi B (strain ATCC BAA-1250 / SPB7)</name>
    <dbReference type="NCBI Taxonomy" id="1016998"/>
    <lineage>
        <taxon>Bacteria</taxon>
        <taxon>Pseudomonadati</taxon>
        <taxon>Pseudomonadota</taxon>
        <taxon>Gammaproteobacteria</taxon>
        <taxon>Enterobacterales</taxon>
        <taxon>Enterobacteriaceae</taxon>
        <taxon>Salmonella</taxon>
    </lineage>
</organism>
<dbReference type="EMBL" id="CP000886">
    <property type="protein sequence ID" value="ABX70420.1"/>
    <property type="molecule type" value="Genomic_DNA"/>
</dbReference>
<dbReference type="RefSeq" id="WP_001207203.1">
    <property type="nucleotide sequence ID" value="NC_010102.1"/>
</dbReference>
<dbReference type="GeneID" id="93756505"/>
<dbReference type="KEGG" id="spq:SPAB_05139"/>
<dbReference type="PATRIC" id="fig|1016998.12.peg.4815"/>
<dbReference type="HOGENOM" id="CLU_092227_0_2_6"/>
<dbReference type="BioCyc" id="SENT1016998:SPAB_RS20915-MONOMER"/>
<dbReference type="Proteomes" id="UP000008556">
    <property type="component" value="Chromosome"/>
</dbReference>
<dbReference type="GO" id="GO:0015934">
    <property type="term" value="C:large ribosomal subunit"/>
    <property type="evidence" value="ECO:0007669"/>
    <property type="project" value="InterPro"/>
</dbReference>
<dbReference type="GO" id="GO:0070180">
    <property type="term" value="F:large ribosomal subunit rRNA binding"/>
    <property type="evidence" value="ECO:0007669"/>
    <property type="project" value="UniProtKB-UniRule"/>
</dbReference>
<dbReference type="GO" id="GO:0003735">
    <property type="term" value="F:structural constituent of ribosome"/>
    <property type="evidence" value="ECO:0007669"/>
    <property type="project" value="InterPro"/>
</dbReference>
<dbReference type="GO" id="GO:0006412">
    <property type="term" value="P:translation"/>
    <property type="evidence" value="ECO:0007669"/>
    <property type="project" value="UniProtKB-UniRule"/>
</dbReference>
<dbReference type="CDD" id="cd05797">
    <property type="entry name" value="Ribosomal_L10"/>
    <property type="match status" value="1"/>
</dbReference>
<dbReference type="FunFam" id="3.30.70.1730:FF:000001">
    <property type="entry name" value="50S ribosomal protein L10"/>
    <property type="match status" value="1"/>
</dbReference>
<dbReference type="Gene3D" id="3.30.70.1730">
    <property type="match status" value="1"/>
</dbReference>
<dbReference type="Gene3D" id="6.10.250.2350">
    <property type="match status" value="1"/>
</dbReference>
<dbReference type="HAMAP" id="MF_00362">
    <property type="entry name" value="Ribosomal_uL10"/>
    <property type="match status" value="1"/>
</dbReference>
<dbReference type="InterPro" id="IPR001790">
    <property type="entry name" value="Ribosomal_uL10"/>
</dbReference>
<dbReference type="InterPro" id="IPR043141">
    <property type="entry name" value="Ribosomal_uL10-like_sf"/>
</dbReference>
<dbReference type="InterPro" id="IPR022973">
    <property type="entry name" value="Ribosomal_uL10_bac"/>
</dbReference>
<dbReference type="InterPro" id="IPR047865">
    <property type="entry name" value="Ribosomal_uL10_bac_type"/>
</dbReference>
<dbReference type="InterPro" id="IPR002363">
    <property type="entry name" value="Ribosomal_uL10_CS_bac"/>
</dbReference>
<dbReference type="NCBIfam" id="NF000955">
    <property type="entry name" value="PRK00099.1-1"/>
    <property type="match status" value="1"/>
</dbReference>
<dbReference type="PANTHER" id="PTHR11560">
    <property type="entry name" value="39S RIBOSOMAL PROTEIN L10, MITOCHONDRIAL"/>
    <property type="match status" value="1"/>
</dbReference>
<dbReference type="Pfam" id="PF00466">
    <property type="entry name" value="Ribosomal_L10"/>
    <property type="match status" value="1"/>
</dbReference>
<dbReference type="SUPFAM" id="SSF160369">
    <property type="entry name" value="Ribosomal protein L10-like"/>
    <property type="match status" value="1"/>
</dbReference>
<dbReference type="PROSITE" id="PS01109">
    <property type="entry name" value="RIBOSOMAL_L10"/>
    <property type="match status" value="1"/>
</dbReference>
<name>RL10_SALPB</name>
<keyword id="KW-0687">Ribonucleoprotein</keyword>
<keyword id="KW-0689">Ribosomal protein</keyword>
<keyword id="KW-0694">RNA-binding</keyword>
<keyword id="KW-0699">rRNA-binding</keyword>
<feature type="chain" id="PRO_1000079559" description="Large ribosomal subunit protein uL10">
    <location>
        <begin position="1"/>
        <end position="165"/>
    </location>
</feature>
<protein>
    <recommendedName>
        <fullName evidence="1">Large ribosomal subunit protein uL10</fullName>
    </recommendedName>
    <alternativeName>
        <fullName evidence="2">50S ribosomal protein L10</fullName>
    </alternativeName>
</protein>
<accession>A9N0J1</accession>
<sequence length="165" mass="17801">MALNLQDKQAIVAEVSEVAKGALSAVVADSRGVTVDKMTELRKAGREAGVYMRVVRNTLLRRVVEGTQFECLKDTFVGPTLIAYSMEHPGAAARLFKEFAKANAKFEVKAAAFEGELIPASQIDRLATLPTYEEAIARLMATMKEASAGKLVRTLAAVRDAKEAA</sequence>
<evidence type="ECO:0000255" key="1">
    <source>
        <dbReference type="HAMAP-Rule" id="MF_00362"/>
    </source>
</evidence>
<evidence type="ECO:0000305" key="2"/>
<reference key="1">
    <citation type="submission" date="2007-11" db="EMBL/GenBank/DDBJ databases">
        <authorList>
            <consortium name="The Salmonella enterica serovar Paratyphi B Genome Sequencing Project"/>
            <person name="McClelland M."/>
            <person name="Sanderson E.K."/>
            <person name="Porwollik S."/>
            <person name="Spieth J."/>
            <person name="Clifton W.S."/>
            <person name="Fulton R."/>
            <person name="Cordes M."/>
            <person name="Wollam A."/>
            <person name="Shah N."/>
            <person name="Pepin K."/>
            <person name="Bhonagiri V."/>
            <person name="Nash W."/>
            <person name="Johnson M."/>
            <person name="Thiruvilangam P."/>
            <person name="Wilson R."/>
        </authorList>
    </citation>
    <scope>NUCLEOTIDE SEQUENCE [LARGE SCALE GENOMIC DNA]</scope>
    <source>
        <strain>ATCC BAA-1250 / SPB7</strain>
    </source>
</reference>